<dbReference type="EMBL" id="CP001359">
    <property type="protein sequence ID" value="ACL67832.1"/>
    <property type="molecule type" value="Genomic_DNA"/>
</dbReference>
<dbReference type="KEGG" id="acp:A2cp1_4515"/>
<dbReference type="HOGENOM" id="CLU_144811_6_0_7"/>
<dbReference type="Proteomes" id="UP000007089">
    <property type="component" value="Chromosome"/>
</dbReference>
<dbReference type="GO" id="GO:0005886">
    <property type="term" value="C:plasma membrane"/>
    <property type="evidence" value="ECO:0007669"/>
    <property type="project" value="UniProtKB-SubCell"/>
</dbReference>
<dbReference type="HAMAP" id="MF_00386">
    <property type="entry name" value="UPF0161_YidD"/>
    <property type="match status" value="1"/>
</dbReference>
<dbReference type="InterPro" id="IPR002696">
    <property type="entry name" value="Membr_insert_effic_factor_YidD"/>
</dbReference>
<dbReference type="NCBIfam" id="TIGR00278">
    <property type="entry name" value="membrane protein insertion efficiency factor YidD"/>
    <property type="match status" value="1"/>
</dbReference>
<dbReference type="PANTHER" id="PTHR33383">
    <property type="entry name" value="MEMBRANE PROTEIN INSERTION EFFICIENCY FACTOR-RELATED"/>
    <property type="match status" value="1"/>
</dbReference>
<dbReference type="PANTHER" id="PTHR33383:SF1">
    <property type="entry name" value="MEMBRANE PROTEIN INSERTION EFFICIENCY FACTOR-RELATED"/>
    <property type="match status" value="1"/>
</dbReference>
<dbReference type="Pfam" id="PF01809">
    <property type="entry name" value="YidD"/>
    <property type="match status" value="1"/>
</dbReference>
<dbReference type="SMART" id="SM01234">
    <property type="entry name" value="Haemolytic"/>
    <property type="match status" value="1"/>
</dbReference>
<keyword id="KW-0997">Cell inner membrane</keyword>
<keyword id="KW-1003">Cell membrane</keyword>
<keyword id="KW-0472">Membrane</keyword>
<protein>
    <recommendedName>
        <fullName evidence="1">Putative membrane protein insertion efficiency factor</fullName>
    </recommendedName>
</protein>
<sequence length="76" mass="8524">MIRAALVLLVRIYQRLVSPLLPPACRFYPSCSAYAVTALQRHGALRGSWLTVRRLCRCHPFHAGGVDPVPELTPKR</sequence>
<name>YIDD_ANAD2</name>
<feature type="chain" id="PRO_1000197737" description="Putative membrane protein insertion efficiency factor">
    <location>
        <begin position="1"/>
        <end position="76"/>
    </location>
</feature>
<accession>B8JDK6</accession>
<comment type="function">
    <text evidence="1">Could be involved in insertion of integral membrane proteins into the membrane.</text>
</comment>
<comment type="subcellular location">
    <subcellularLocation>
        <location evidence="1">Cell inner membrane</location>
        <topology evidence="1">Peripheral membrane protein</topology>
        <orientation evidence="1">Cytoplasmic side</orientation>
    </subcellularLocation>
</comment>
<comment type="similarity">
    <text evidence="1">Belongs to the UPF0161 family.</text>
</comment>
<gene>
    <name type="ordered locus">A2cp1_4515</name>
</gene>
<evidence type="ECO:0000255" key="1">
    <source>
        <dbReference type="HAMAP-Rule" id="MF_00386"/>
    </source>
</evidence>
<reference key="1">
    <citation type="submission" date="2009-01" db="EMBL/GenBank/DDBJ databases">
        <title>Complete sequence of Anaeromyxobacter dehalogenans 2CP-1.</title>
        <authorList>
            <person name="Lucas S."/>
            <person name="Copeland A."/>
            <person name="Lapidus A."/>
            <person name="Glavina del Rio T."/>
            <person name="Dalin E."/>
            <person name="Tice H."/>
            <person name="Bruce D."/>
            <person name="Goodwin L."/>
            <person name="Pitluck S."/>
            <person name="Saunders E."/>
            <person name="Brettin T."/>
            <person name="Detter J.C."/>
            <person name="Han C."/>
            <person name="Larimer F."/>
            <person name="Land M."/>
            <person name="Hauser L."/>
            <person name="Kyrpides N."/>
            <person name="Ovchinnikova G."/>
            <person name="Beliaev A.S."/>
            <person name="Richardson P."/>
        </authorList>
    </citation>
    <scope>NUCLEOTIDE SEQUENCE [LARGE SCALE GENOMIC DNA]</scope>
    <source>
        <strain>2CP-1 / ATCC BAA-258</strain>
    </source>
</reference>
<proteinExistence type="inferred from homology"/>
<organism>
    <name type="scientific">Anaeromyxobacter dehalogenans (strain 2CP-1 / ATCC BAA-258)</name>
    <dbReference type="NCBI Taxonomy" id="455488"/>
    <lineage>
        <taxon>Bacteria</taxon>
        <taxon>Pseudomonadati</taxon>
        <taxon>Myxococcota</taxon>
        <taxon>Myxococcia</taxon>
        <taxon>Myxococcales</taxon>
        <taxon>Cystobacterineae</taxon>
        <taxon>Anaeromyxobacteraceae</taxon>
        <taxon>Anaeromyxobacter</taxon>
    </lineage>
</organism>